<comment type="function">
    <text>Involved in sporophytic self-incompatibility system (the inability of flowering plants to achieve self-fertilization), probably acting in combination with S-locus-specific glycoproteins. Interaction with a ligand in the extracellular domain triggers the protein kinase activity of the cytoplasmic domain.</text>
</comment>
<comment type="catalytic activity">
    <reaction>
        <text>L-seryl-[protein] + ATP = O-phospho-L-seryl-[protein] + ADP + H(+)</text>
        <dbReference type="Rhea" id="RHEA:17989"/>
        <dbReference type="Rhea" id="RHEA-COMP:9863"/>
        <dbReference type="Rhea" id="RHEA-COMP:11604"/>
        <dbReference type="ChEBI" id="CHEBI:15378"/>
        <dbReference type="ChEBI" id="CHEBI:29999"/>
        <dbReference type="ChEBI" id="CHEBI:30616"/>
        <dbReference type="ChEBI" id="CHEBI:83421"/>
        <dbReference type="ChEBI" id="CHEBI:456216"/>
        <dbReference type="EC" id="2.7.11.1"/>
    </reaction>
</comment>
<comment type="catalytic activity">
    <reaction>
        <text>L-threonyl-[protein] + ATP = O-phospho-L-threonyl-[protein] + ADP + H(+)</text>
        <dbReference type="Rhea" id="RHEA:46608"/>
        <dbReference type="Rhea" id="RHEA-COMP:11060"/>
        <dbReference type="Rhea" id="RHEA-COMP:11605"/>
        <dbReference type="ChEBI" id="CHEBI:15378"/>
        <dbReference type="ChEBI" id="CHEBI:30013"/>
        <dbReference type="ChEBI" id="CHEBI:30616"/>
        <dbReference type="ChEBI" id="CHEBI:61977"/>
        <dbReference type="ChEBI" id="CHEBI:456216"/>
        <dbReference type="EC" id="2.7.11.1"/>
    </reaction>
</comment>
<comment type="interaction">
    <interactant intactId="EBI-15646168">
        <id>Q09092</id>
    </interactant>
    <interactant intactId="EBI-15646168">
        <id>Q09092</id>
        <label>SRK6</label>
    </interactant>
    <organismsDiffer>false</organismsDiffer>
    <experiments>2</experiments>
</comment>
<comment type="subcellular location">
    <subcellularLocation>
        <location>Membrane</location>
        <topology>Single-pass type I membrane protein</topology>
    </subcellularLocation>
</comment>
<comment type="tissue specificity">
    <text>Predominantly in the pistil and anther.</text>
</comment>
<comment type="polymorphism">
    <text>There are a number of different S alleles in B.oleracea, possibly providing the recognition specificity.</text>
</comment>
<comment type="similarity">
    <text evidence="4">Belongs to the protein kinase superfamily. Ser/Thr protein kinase family.</text>
</comment>
<dbReference type="EC" id="2.7.11.1"/>
<dbReference type="EMBL" id="M76647">
    <property type="protein sequence ID" value="AAA33000.1"/>
    <property type="molecule type" value="mRNA"/>
</dbReference>
<dbReference type="PIR" id="A41369">
    <property type="entry name" value="A41369"/>
</dbReference>
<dbReference type="SMR" id="Q09092"/>
<dbReference type="DIP" id="DIP-60975N"/>
<dbReference type="IntAct" id="Q09092">
    <property type="interactions" value="3"/>
</dbReference>
<dbReference type="GlyCosmos" id="Q09092">
    <property type="glycosylation" value="6 sites, No reported glycans"/>
</dbReference>
<dbReference type="GO" id="GO:0016020">
    <property type="term" value="C:membrane"/>
    <property type="evidence" value="ECO:0007669"/>
    <property type="project" value="UniProtKB-SubCell"/>
</dbReference>
<dbReference type="GO" id="GO:0005524">
    <property type="term" value="F:ATP binding"/>
    <property type="evidence" value="ECO:0007669"/>
    <property type="project" value="UniProtKB-KW"/>
</dbReference>
<dbReference type="GO" id="GO:0042802">
    <property type="term" value="F:identical protein binding"/>
    <property type="evidence" value="ECO:0000353"/>
    <property type="project" value="IntAct"/>
</dbReference>
<dbReference type="GO" id="GO:0106310">
    <property type="term" value="F:protein serine kinase activity"/>
    <property type="evidence" value="ECO:0007669"/>
    <property type="project" value="RHEA"/>
</dbReference>
<dbReference type="GO" id="GO:0004674">
    <property type="term" value="F:protein serine/threonine kinase activity"/>
    <property type="evidence" value="ECO:0007669"/>
    <property type="project" value="UniProtKB-KW"/>
</dbReference>
<dbReference type="GO" id="GO:0060320">
    <property type="term" value="P:rejection of self pollen"/>
    <property type="evidence" value="ECO:0007669"/>
    <property type="project" value="UniProtKB-KW"/>
</dbReference>
<dbReference type="CDD" id="cd00028">
    <property type="entry name" value="B_lectin"/>
    <property type="match status" value="1"/>
</dbReference>
<dbReference type="CDD" id="cd01098">
    <property type="entry name" value="PAN_AP_plant"/>
    <property type="match status" value="1"/>
</dbReference>
<dbReference type="CDD" id="cd14066">
    <property type="entry name" value="STKc_IRAK"/>
    <property type="match status" value="1"/>
</dbReference>
<dbReference type="FunFam" id="1.10.510.10:FF:000060">
    <property type="entry name" value="G-type lectin S-receptor-like serine/threonine-protein kinase"/>
    <property type="match status" value="1"/>
</dbReference>
<dbReference type="FunFam" id="3.30.200.20:FF:000195">
    <property type="entry name" value="G-type lectin S-receptor-like serine/threonine-protein kinase"/>
    <property type="match status" value="1"/>
</dbReference>
<dbReference type="FunFam" id="2.90.10.10:FF:000047">
    <property type="entry name" value="Putative inactive G-type lectin S-receptor-like serine/threonine-protein kinase SRK"/>
    <property type="match status" value="1"/>
</dbReference>
<dbReference type="Gene3D" id="2.90.10.10">
    <property type="entry name" value="Bulb-type lectin domain"/>
    <property type="match status" value="1"/>
</dbReference>
<dbReference type="Gene3D" id="3.50.4.10">
    <property type="entry name" value="Hepatocyte Growth Factor"/>
    <property type="match status" value="1"/>
</dbReference>
<dbReference type="Gene3D" id="3.30.200.20">
    <property type="entry name" value="Phosphorylase Kinase, domain 1"/>
    <property type="match status" value="1"/>
</dbReference>
<dbReference type="Gene3D" id="1.10.510.10">
    <property type="entry name" value="Transferase(Phosphotransferase) domain 1"/>
    <property type="match status" value="1"/>
</dbReference>
<dbReference type="InterPro" id="IPR001480">
    <property type="entry name" value="Bulb-type_lectin_dom"/>
</dbReference>
<dbReference type="InterPro" id="IPR036426">
    <property type="entry name" value="Bulb-type_lectin_dom_sf"/>
</dbReference>
<dbReference type="InterPro" id="IPR011009">
    <property type="entry name" value="Kinase-like_dom_sf"/>
</dbReference>
<dbReference type="InterPro" id="IPR003609">
    <property type="entry name" value="Pan_app"/>
</dbReference>
<dbReference type="InterPro" id="IPR000719">
    <property type="entry name" value="Prot_kinase_dom"/>
</dbReference>
<dbReference type="InterPro" id="IPR017441">
    <property type="entry name" value="Protein_kinase_ATP_BS"/>
</dbReference>
<dbReference type="InterPro" id="IPR022126">
    <property type="entry name" value="S-locus_recpt_kinase"/>
</dbReference>
<dbReference type="InterPro" id="IPR021820">
    <property type="entry name" value="S-locus_recpt_kinase_C"/>
</dbReference>
<dbReference type="InterPro" id="IPR000858">
    <property type="entry name" value="S_locus_glycoprot_dom"/>
</dbReference>
<dbReference type="InterPro" id="IPR001245">
    <property type="entry name" value="Ser-Thr/Tyr_kinase_cat_dom"/>
</dbReference>
<dbReference type="InterPro" id="IPR008271">
    <property type="entry name" value="Ser/Thr_kinase_AS"/>
</dbReference>
<dbReference type="InterPro" id="IPR024171">
    <property type="entry name" value="SRK-like_kinase"/>
</dbReference>
<dbReference type="PANTHER" id="PTHR32444">
    <property type="entry name" value="BULB-TYPE LECTIN DOMAIN-CONTAINING PROTEIN"/>
    <property type="match status" value="1"/>
</dbReference>
<dbReference type="PANTHER" id="PTHR32444:SF251">
    <property type="entry name" value="INACTIVE G-TYPE LECTIN S-RECEPTOR-LIKE SERINE_THREONINE-PROTEIN KINASE SRK-RELATED"/>
    <property type="match status" value="1"/>
</dbReference>
<dbReference type="Pfam" id="PF01453">
    <property type="entry name" value="B_lectin"/>
    <property type="match status" value="1"/>
</dbReference>
<dbReference type="Pfam" id="PF11883">
    <property type="entry name" value="DUF3403"/>
    <property type="match status" value="1"/>
</dbReference>
<dbReference type="Pfam" id="PF12398">
    <property type="entry name" value="DUF3660"/>
    <property type="match status" value="1"/>
</dbReference>
<dbReference type="Pfam" id="PF08276">
    <property type="entry name" value="PAN_2"/>
    <property type="match status" value="1"/>
</dbReference>
<dbReference type="Pfam" id="PF07714">
    <property type="entry name" value="PK_Tyr_Ser-Thr"/>
    <property type="match status" value="1"/>
</dbReference>
<dbReference type="Pfam" id="PF00954">
    <property type="entry name" value="S_locus_glycop"/>
    <property type="match status" value="1"/>
</dbReference>
<dbReference type="PIRSF" id="PIRSF000641">
    <property type="entry name" value="SRK"/>
    <property type="match status" value="1"/>
</dbReference>
<dbReference type="SMART" id="SM00108">
    <property type="entry name" value="B_lectin"/>
    <property type="match status" value="1"/>
</dbReference>
<dbReference type="SMART" id="SM00473">
    <property type="entry name" value="PAN_AP"/>
    <property type="match status" value="1"/>
</dbReference>
<dbReference type="SMART" id="SM00220">
    <property type="entry name" value="S_TKc"/>
    <property type="match status" value="1"/>
</dbReference>
<dbReference type="SUPFAM" id="SSF51110">
    <property type="entry name" value="alpha-D-mannose-specific plant lectins"/>
    <property type="match status" value="1"/>
</dbReference>
<dbReference type="SUPFAM" id="SSF56112">
    <property type="entry name" value="Protein kinase-like (PK-like)"/>
    <property type="match status" value="1"/>
</dbReference>
<dbReference type="PROSITE" id="PS50927">
    <property type="entry name" value="BULB_LECTIN"/>
    <property type="match status" value="1"/>
</dbReference>
<dbReference type="PROSITE" id="PS50948">
    <property type="entry name" value="PAN"/>
    <property type="match status" value="1"/>
</dbReference>
<dbReference type="PROSITE" id="PS00107">
    <property type="entry name" value="PROTEIN_KINASE_ATP"/>
    <property type="match status" value="1"/>
</dbReference>
<dbReference type="PROSITE" id="PS50011">
    <property type="entry name" value="PROTEIN_KINASE_DOM"/>
    <property type="match status" value="1"/>
</dbReference>
<dbReference type="PROSITE" id="PS00108">
    <property type="entry name" value="PROTEIN_KINASE_ST"/>
    <property type="match status" value="1"/>
</dbReference>
<keyword id="KW-0067">ATP-binding</keyword>
<keyword id="KW-1015">Disulfide bond</keyword>
<keyword id="KW-0325">Glycoprotein</keyword>
<keyword id="KW-0418">Kinase</keyword>
<keyword id="KW-0472">Membrane</keyword>
<keyword id="KW-0547">Nucleotide-binding</keyword>
<keyword id="KW-0675">Receptor</keyword>
<keyword id="KW-0713">Self-incompatibility</keyword>
<keyword id="KW-0723">Serine/threonine-protein kinase</keyword>
<keyword id="KW-0732">Signal</keyword>
<keyword id="KW-0808">Transferase</keyword>
<keyword id="KW-0812">Transmembrane</keyword>
<keyword id="KW-1133">Transmembrane helix</keyword>
<name>SRK6_BRAOV</name>
<sequence>MKGARNIYHHSYMSFLLVFVVMILIHPALSIYINTLSSTESLTISSNKTLVSPGSIFEVGFFRTNSRWYLGMWYKKVSDRTYVWVANRDNPLSNAIGTLKISGNNLVLLDHSNKPVWWTNLTRGNERSPVVAELLANGNFVMRDSSNNDASEYLWQSFDYPTDTLLPEMKLGYNLKTGLNRFLTSWRSSDDPSSGNFSYKLETQSLPEFYLSRENFPMHRSGPWNGIRFSGIPEDQKLSYMVYNFIENNEEVAYTFRMTNNSFYSRLTLISEGYFQRLTWYPSIRIWNRFWSSPVDPQCDTYIMCGPYAYCDVNTSPVCNCIQGFNPRNIQQWDQRVWAGGCIRRTQLSCSGDGFTRMKKMKLPETTMATVDRSIGVKECKKRCISDCNCTAFANADIRNGGSGCVIWTERLEDIRNYATDAIDGQDLYVRLAAADIAKKRNASGKIISLTVGVSVLLLLIMFCLWKRKQKRAKASAISIANTQRNQNLPMNEMVLSSKREFSGEYKFEELELPLIEMETVVKATENFSSCNKLGQGGFGIVYKGRLLDGKEIAVKRLSKTSVQGTDEFMNEVTLIARLQHINLVQVLGCCIEGDEKMLIYEYLENLSLDSYLFGKTRRSKLNWNERFDITNGVARGLLYLHQDSRFRIIHRDLKVSNILLDKNMIPKISDFGMARIFERDETEANTMKVVGTYGYMSPEYAMYGIFSEKSDVFSFGVIVLEIVSGKKNRGFYNLDYENDLLSYVWSRWKEGRALEIVDPVIVDSLSSQPSIFQPQEVLKCIQIGLLCVQELAEHRPAMSSVVWMFGSEATEIPQPKPPGYCVRRSPYELDPSSSWQCDENESWTVNQYTCSVIDAR</sequence>
<feature type="signal peptide" evidence="2">
    <location>
        <begin position="1"/>
        <end position="32"/>
    </location>
</feature>
<feature type="chain" id="PRO_0000024385" description="Putative serine/threonine-protein kinase receptor">
    <location>
        <begin position="33"/>
        <end position="857"/>
    </location>
</feature>
<feature type="topological domain" description="Extracellular" evidence="2">
    <location>
        <begin position="33"/>
        <end position="446"/>
    </location>
</feature>
<feature type="transmembrane region" description="Helical" evidence="2">
    <location>
        <begin position="447"/>
        <end position="466"/>
    </location>
</feature>
<feature type="topological domain" description="Cytoplasmic" evidence="2">
    <location>
        <begin position="467"/>
        <end position="857"/>
    </location>
</feature>
<feature type="domain" description="Bulb-type lectin" evidence="3">
    <location>
        <begin position="35"/>
        <end position="155"/>
    </location>
</feature>
<feature type="domain" description="PAN" evidence="5">
    <location>
        <begin position="350"/>
        <end position="433"/>
    </location>
</feature>
<feature type="domain" description="Protein kinase" evidence="4">
    <location>
        <begin position="528"/>
        <end position="779"/>
    </location>
</feature>
<feature type="active site" description="Proton acceptor" evidence="4 6">
    <location>
        <position position="653"/>
    </location>
</feature>
<feature type="binding site" evidence="4">
    <location>
        <begin position="534"/>
        <end position="542"/>
    </location>
    <ligand>
        <name>ATP</name>
        <dbReference type="ChEBI" id="CHEBI:30616"/>
    </ligand>
</feature>
<feature type="binding site" evidence="4">
    <location>
        <position position="556"/>
    </location>
    <ligand>
        <name>ATP</name>
        <dbReference type="ChEBI" id="CHEBI:30616"/>
    </ligand>
</feature>
<feature type="glycosylation site" description="N-linked (GlcNAc...) asparagine" evidence="2">
    <location>
        <position position="47"/>
    </location>
</feature>
<feature type="glycosylation site" description="N-linked (GlcNAc...) asparagine" evidence="2">
    <location>
        <position position="120"/>
    </location>
</feature>
<feature type="glycosylation site" description="N-linked (GlcNAc...) asparagine" evidence="2">
    <location>
        <position position="196"/>
    </location>
</feature>
<feature type="glycosylation site" description="N-linked (GlcNAc...) asparagine" evidence="2">
    <location>
        <position position="260"/>
    </location>
</feature>
<feature type="glycosylation site" description="N-linked (GlcNAc...) asparagine" evidence="2">
    <location>
        <position position="389"/>
    </location>
</feature>
<feature type="glycosylation site" description="N-linked (GlcNAc...) asparagine" evidence="2">
    <location>
        <position position="442"/>
    </location>
</feature>
<feature type="disulfide bond" evidence="1">
    <location>
        <begin position="380"/>
        <end position="405"/>
    </location>
</feature>
<feature type="disulfide bond" evidence="1">
    <location>
        <begin position="388"/>
        <end position="390"/>
    </location>
</feature>
<evidence type="ECO:0000250" key="1"/>
<evidence type="ECO:0000255" key="2"/>
<evidence type="ECO:0000255" key="3">
    <source>
        <dbReference type="PROSITE-ProRule" id="PRU00038"/>
    </source>
</evidence>
<evidence type="ECO:0000255" key="4">
    <source>
        <dbReference type="PROSITE-ProRule" id="PRU00159"/>
    </source>
</evidence>
<evidence type="ECO:0000255" key="5">
    <source>
        <dbReference type="PROSITE-ProRule" id="PRU00315"/>
    </source>
</evidence>
<evidence type="ECO:0000255" key="6">
    <source>
        <dbReference type="PROSITE-ProRule" id="PRU10027"/>
    </source>
</evidence>
<accession>Q09092</accession>
<protein>
    <recommendedName>
        <fullName>Putative serine/threonine-protein kinase receptor</fullName>
        <ecNumber>2.7.11.1</ecNumber>
    </recommendedName>
    <alternativeName>
        <fullName>S-receptor kinase</fullName>
        <shortName>SRK</shortName>
    </alternativeName>
</protein>
<proteinExistence type="evidence at protein level"/>
<gene>
    <name type="primary">SRK6</name>
</gene>
<organism>
    <name type="scientific">Brassica oleracea var. viridis</name>
    <name type="common">Flowering kale</name>
    <name type="synonym">Brassica oleracea var. acephala</name>
    <dbReference type="NCBI Taxonomy" id="3713"/>
    <lineage>
        <taxon>Eukaryota</taxon>
        <taxon>Viridiplantae</taxon>
        <taxon>Streptophyta</taxon>
        <taxon>Embryophyta</taxon>
        <taxon>Tracheophyta</taxon>
        <taxon>Spermatophyta</taxon>
        <taxon>Magnoliopsida</taxon>
        <taxon>eudicotyledons</taxon>
        <taxon>Gunneridae</taxon>
        <taxon>Pentapetalae</taxon>
        <taxon>rosids</taxon>
        <taxon>malvids</taxon>
        <taxon>Brassicales</taxon>
        <taxon>Brassicaceae</taxon>
        <taxon>Brassiceae</taxon>
        <taxon>Brassica</taxon>
    </lineage>
</organism>
<reference key="1">
    <citation type="journal article" date="1991" name="Proc. Natl. Acad. Sci. U.S.A.">
        <title>Molecular cloning of a putative receptor protein kinase gene encoded at the self-incompatibility locus of Brassica oleracea.</title>
        <authorList>
            <person name="Stein J.C."/>
            <person name="Howlett B."/>
            <person name="Boyes D.C."/>
            <person name="Nasrallah M.E."/>
        </authorList>
    </citation>
    <scope>NUCLEOTIDE SEQUENCE [MRNA]</scope>
    <source>
        <strain>S6S6</strain>
        <tissue>Stigma</tissue>
    </source>
</reference>